<organism>
    <name type="scientific">Oryza sativa subsp. japonica</name>
    <name type="common">Rice</name>
    <dbReference type="NCBI Taxonomy" id="39947"/>
    <lineage>
        <taxon>Eukaryota</taxon>
        <taxon>Viridiplantae</taxon>
        <taxon>Streptophyta</taxon>
        <taxon>Embryophyta</taxon>
        <taxon>Tracheophyta</taxon>
        <taxon>Spermatophyta</taxon>
        <taxon>Magnoliopsida</taxon>
        <taxon>Liliopsida</taxon>
        <taxon>Poales</taxon>
        <taxon>Poaceae</taxon>
        <taxon>BOP clade</taxon>
        <taxon>Oryzoideae</taxon>
        <taxon>Oryzeae</taxon>
        <taxon>Oryzinae</taxon>
        <taxon>Oryza</taxon>
        <taxon>Oryza sativa</taxon>
    </lineage>
</organism>
<sequence>MAATAAASVAAISPLPGASLPRPVSARVPLLPRASPPTWRLSVGSARARSTRCLAAAGGGGLAPEMRATLDKVVGSHKVVLFMKGTKDFPQCGFSHTVVQILRSLDVPFETLDVLANEALRQGLKEYSSWPTFPQLYIDGEFFGGCDITVDAYKSGELQETLEKAMLS</sequence>
<feature type="transit peptide" description="Chloroplast" evidence="2">
    <location>
        <begin position="1"/>
        <end position="54"/>
    </location>
</feature>
<feature type="chain" id="PRO_0000271276" description="Monothiol glutaredoxin-S7, chloroplastic">
    <location>
        <begin position="55"/>
        <end position="168"/>
    </location>
</feature>
<feature type="domain" description="Glutaredoxin" evidence="3">
    <location>
        <begin position="67"/>
        <end position="168"/>
    </location>
</feature>
<feature type="binding site" evidence="1">
    <location>
        <position position="84"/>
    </location>
    <ligand>
        <name>glutathione</name>
        <dbReference type="ChEBI" id="CHEBI:57925"/>
    </ligand>
</feature>
<feature type="binding site" evidence="1">
    <location>
        <position position="92"/>
    </location>
    <ligand>
        <name>[2Fe-2S] cluster</name>
        <dbReference type="ChEBI" id="CHEBI:190135"/>
        <note>ligand shared between dimeric partners</note>
    </ligand>
</feature>
<feature type="binding site" evidence="1">
    <location>
        <position position="121"/>
    </location>
    <ligand>
        <name>glutathione</name>
        <dbReference type="ChEBI" id="CHEBI:57925"/>
    </ligand>
</feature>
<feature type="binding site" evidence="1">
    <location>
        <position position="133"/>
    </location>
    <ligand>
        <name>glutathione</name>
        <dbReference type="ChEBI" id="CHEBI:57925"/>
    </ligand>
</feature>
<feature type="binding site" evidence="1">
    <location>
        <begin position="146"/>
        <end position="147"/>
    </location>
    <ligand>
        <name>glutathione</name>
        <dbReference type="ChEBI" id="CHEBI:57925"/>
    </ligand>
</feature>
<dbReference type="EMBL" id="AC096688">
    <property type="protein sequence ID" value="AAO20065.1"/>
    <property type="molecule type" value="Genomic_DNA"/>
</dbReference>
<dbReference type="EMBL" id="DP000009">
    <property type="protein sequence ID" value="ABF99928.1"/>
    <property type="molecule type" value="Genomic_DNA"/>
</dbReference>
<dbReference type="EMBL" id="AP008209">
    <property type="protein sequence ID" value="BAF13827.1"/>
    <property type="molecule type" value="Genomic_DNA"/>
</dbReference>
<dbReference type="EMBL" id="AP014959">
    <property type="protein sequence ID" value="BAS87384.1"/>
    <property type="molecule type" value="Genomic_DNA"/>
</dbReference>
<dbReference type="EMBL" id="CM000140">
    <property type="protein sequence ID" value="EEE60311.1"/>
    <property type="molecule type" value="Genomic_DNA"/>
</dbReference>
<dbReference type="EMBL" id="AK059425">
    <property type="protein sequence ID" value="BAG86988.1"/>
    <property type="molecule type" value="mRNA"/>
</dbReference>
<dbReference type="RefSeq" id="XP_015630443.1">
    <property type="nucleotide sequence ID" value="XM_015774957.1"/>
</dbReference>
<dbReference type="SMR" id="Q851Y7"/>
<dbReference type="FunCoup" id="Q851Y7">
    <property type="interactions" value="2346"/>
</dbReference>
<dbReference type="STRING" id="39947.Q851Y7"/>
<dbReference type="PaxDb" id="39947-Q851Y7"/>
<dbReference type="EnsemblPlants" id="Os03t0851200-01">
    <property type="protein sequence ID" value="Os03t0851200-01"/>
    <property type="gene ID" value="Os03g0851200"/>
</dbReference>
<dbReference type="Gramene" id="Os03t0851200-01">
    <property type="protein sequence ID" value="Os03t0851200-01"/>
    <property type="gene ID" value="Os03g0851200"/>
</dbReference>
<dbReference type="KEGG" id="dosa:Os03g0851200"/>
<dbReference type="eggNOG" id="KOG0911">
    <property type="taxonomic scope" value="Eukaryota"/>
</dbReference>
<dbReference type="HOGENOM" id="CLU_026126_3_2_1"/>
<dbReference type="InParanoid" id="Q851Y7"/>
<dbReference type="OMA" id="QYSSWPT"/>
<dbReference type="OrthoDB" id="415696at2759"/>
<dbReference type="Proteomes" id="UP000000763">
    <property type="component" value="Chromosome 3"/>
</dbReference>
<dbReference type="Proteomes" id="UP000007752">
    <property type="component" value="Chromosome 3"/>
</dbReference>
<dbReference type="Proteomes" id="UP000059680">
    <property type="component" value="Chromosome 3"/>
</dbReference>
<dbReference type="GO" id="GO:0009507">
    <property type="term" value="C:chloroplast"/>
    <property type="evidence" value="ECO:0007669"/>
    <property type="project" value="UniProtKB-SubCell"/>
</dbReference>
<dbReference type="GO" id="GO:0051537">
    <property type="term" value="F:2 iron, 2 sulfur cluster binding"/>
    <property type="evidence" value="ECO:0007669"/>
    <property type="project" value="UniProtKB-KW"/>
</dbReference>
<dbReference type="GO" id="GO:0046872">
    <property type="term" value="F:metal ion binding"/>
    <property type="evidence" value="ECO:0007669"/>
    <property type="project" value="UniProtKB-KW"/>
</dbReference>
<dbReference type="CDD" id="cd03028">
    <property type="entry name" value="GRX_PICOT_like"/>
    <property type="match status" value="1"/>
</dbReference>
<dbReference type="FunFam" id="3.40.30.10:FF:000005">
    <property type="entry name" value="Glutaredoxin 5"/>
    <property type="match status" value="1"/>
</dbReference>
<dbReference type="Gene3D" id="3.40.30.10">
    <property type="entry name" value="Glutaredoxin"/>
    <property type="match status" value="1"/>
</dbReference>
<dbReference type="InterPro" id="IPR002109">
    <property type="entry name" value="Glutaredoxin"/>
</dbReference>
<dbReference type="InterPro" id="IPR033658">
    <property type="entry name" value="GRX_PICOT-like"/>
</dbReference>
<dbReference type="InterPro" id="IPR004480">
    <property type="entry name" value="Monothiol_GRX-rel"/>
</dbReference>
<dbReference type="InterPro" id="IPR036249">
    <property type="entry name" value="Thioredoxin-like_sf"/>
</dbReference>
<dbReference type="NCBIfam" id="TIGR00365">
    <property type="entry name" value="Grx4 family monothiol glutaredoxin"/>
    <property type="match status" value="1"/>
</dbReference>
<dbReference type="PANTHER" id="PTHR10293">
    <property type="entry name" value="GLUTAREDOXIN FAMILY MEMBER"/>
    <property type="match status" value="1"/>
</dbReference>
<dbReference type="PANTHER" id="PTHR10293:SF72">
    <property type="entry name" value="MONOTHIOL GLUTAREDOXIN-S14, CHLOROPLASTIC"/>
    <property type="match status" value="1"/>
</dbReference>
<dbReference type="Pfam" id="PF00462">
    <property type="entry name" value="Glutaredoxin"/>
    <property type="match status" value="1"/>
</dbReference>
<dbReference type="SUPFAM" id="SSF52833">
    <property type="entry name" value="Thioredoxin-like"/>
    <property type="match status" value="1"/>
</dbReference>
<dbReference type="PROSITE" id="PS51354">
    <property type="entry name" value="GLUTAREDOXIN_2"/>
    <property type="match status" value="1"/>
</dbReference>
<evidence type="ECO:0000250" key="1"/>
<evidence type="ECO:0000255" key="2"/>
<evidence type="ECO:0000255" key="3">
    <source>
        <dbReference type="PROSITE-ProRule" id="PRU00686"/>
    </source>
</evidence>
<evidence type="ECO:0000305" key="4"/>
<evidence type="ECO:0000312" key="5">
    <source>
        <dbReference type="EMBL" id="EEE60311.1"/>
    </source>
</evidence>
<proteinExistence type="evidence at transcript level"/>
<protein>
    <recommendedName>
        <fullName>Monothiol glutaredoxin-S7, chloroplastic</fullName>
    </recommendedName>
</protein>
<keyword id="KW-0001">2Fe-2S</keyword>
<keyword id="KW-0150">Chloroplast</keyword>
<keyword id="KW-0408">Iron</keyword>
<keyword id="KW-0411">Iron-sulfur</keyword>
<keyword id="KW-0479">Metal-binding</keyword>
<keyword id="KW-0934">Plastid</keyword>
<keyword id="KW-0676">Redox-active center</keyword>
<keyword id="KW-1185">Reference proteome</keyword>
<keyword id="KW-0809">Transit peptide</keyword>
<name>GRXS7_ORYSJ</name>
<reference key="1">
    <citation type="journal article" date="2005" name="Genome Res.">
        <title>Sequence, annotation, and analysis of synteny between rice chromosome 3 and diverged grass species.</title>
        <authorList>
            <consortium name="The rice chromosome 3 sequencing consortium"/>
            <person name="Buell C.R."/>
            <person name="Yuan Q."/>
            <person name="Ouyang S."/>
            <person name="Liu J."/>
            <person name="Zhu W."/>
            <person name="Wang A."/>
            <person name="Maiti R."/>
            <person name="Haas B."/>
            <person name="Wortman J."/>
            <person name="Pertea M."/>
            <person name="Jones K.M."/>
            <person name="Kim M."/>
            <person name="Overton L."/>
            <person name="Tsitrin T."/>
            <person name="Fadrosh D."/>
            <person name="Bera J."/>
            <person name="Weaver B."/>
            <person name="Jin S."/>
            <person name="Johri S."/>
            <person name="Reardon M."/>
            <person name="Webb K."/>
            <person name="Hill J."/>
            <person name="Moffat K."/>
            <person name="Tallon L."/>
            <person name="Van Aken S."/>
            <person name="Lewis M."/>
            <person name="Utterback T."/>
            <person name="Feldblyum T."/>
            <person name="Zismann V."/>
            <person name="Iobst S."/>
            <person name="Hsiao J."/>
            <person name="de Vazeille A.R."/>
            <person name="Salzberg S.L."/>
            <person name="White O."/>
            <person name="Fraser C.M."/>
            <person name="Yu Y."/>
            <person name="Kim H."/>
            <person name="Rambo T."/>
            <person name="Currie J."/>
            <person name="Collura K."/>
            <person name="Kernodle-Thompson S."/>
            <person name="Wei F."/>
            <person name="Kudrna K."/>
            <person name="Ammiraju J.S.S."/>
            <person name="Luo M."/>
            <person name="Goicoechea J.L."/>
            <person name="Wing R.A."/>
            <person name="Henry D."/>
            <person name="Oates R."/>
            <person name="Palmer M."/>
            <person name="Pries G."/>
            <person name="Saski C."/>
            <person name="Simmons J."/>
            <person name="Soderlund C."/>
            <person name="Nelson W."/>
            <person name="de la Bastide M."/>
            <person name="Spiegel L."/>
            <person name="Nascimento L."/>
            <person name="Huang E."/>
            <person name="Preston R."/>
            <person name="Zutavern T."/>
            <person name="Palmer L."/>
            <person name="O'Shaughnessy A."/>
            <person name="Dike S."/>
            <person name="McCombie W.R."/>
            <person name="Minx P."/>
            <person name="Cordum H."/>
            <person name="Wilson R."/>
            <person name="Jin W."/>
            <person name="Lee H.R."/>
            <person name="Jiang J."/>
            <person name="Jackson S."/>
        </authorList>
    </citation>
    <scope>NUCLEOTIDE SEQUENCE [LARGE SCALE GENOMIC DNA]</scope>
    <source>
        <strain>cv. Nipponbare</strain>
    </source>
</reference>
<reference key="2">
    <citation type="journal article" date="2005" name="Nature">
        <title>The map-based sequence of the rice genome.</title>
        <authorList>
            <consortium name="International rice genome sequencing project (IRGSP)"/>
        </authorList>
    </citation>
    <scope>NUCLEOTIDE SEQUENCE [LARGE SCALE GENOMIC DNA]</scope>
    <source>
        <strain>cv. Nipponbare</strain>
    </source>
</reference>
<reference key="3">
    <citation type="journal article" date="2008" name="Nucleic Acids Res.">
        <title>The rice annotation project database (RAP-DB): 2008 update.</title>
        <authorList>
            <consortium name="The rice annotation project (RAP)"/>
        </authorList>
    </citation>
    <scope>GENOME REANNOTATION</scope>
    <source>
        <strain>cv. Nipponbare</strain>
    </source>
</reference>
<reference key="4">
    <citation type="journal article" date="2013" name="Rice">
        <title>Improvement of the Oryza sativa Nipponbare reference genome using next generation sequence and optical map data.</title>
        <authorList>
            <person name="Kawahara Y."/>
            <person name="de la Bastide M."/>
            <person name="Hamilton J.P."/>
            <person name="Kanamori H."/>
            <person name="McCombie W.R."/>
            <person name="Ouyang S."/>
            <person name="Schwartz D.C."/>
            <person name="Tanaka T."/>
            <person name="Wu J."/>
            <person name="Zhou S."/>
            <person name="Childs K.L."/>
            <person name="Davidson R.M."/>
            <person name="Lin H."/>
            <person name="Quesada-Ocampo L."/>
            <person name="Vaillancourt B."/>
            <person name="Sakai H."/>
            <person name="Lee S.S."/>
            <person name="Kim J."/>
            <person name="Numa H."/>
            <person name="Itoh T."/>
            <person name="Buell C.R."/>
            <person name="Matsumoto T."/>
        </authorList>
    </citation>
    <scope>GENOME REANNOTATION</scope>
    <source>
        <strain>cv. Nipponbare</strain>
    </source>
</reference>
<reference key="5">
    <citation type="journal article" date="2005" name="PLoS Biol.">
        <title>The genomes of Oryza sativa: a history of duplications.</title>
        <authorList>
            <person name="Yu J."/>
            <person name="Wang J."/>
            <person name="Lin W."/>
            <person name="Li S."/>
            <person name="Li H."/>
            <person name="Zhou J."/>
            <person name="Ni P."/>
            <person name="Dong W."/>
            <person name="Hu S."/>
            <person name="Zeng C."/>
            <person name="Zhang J."/>
            <person name="Zhang Y."/>
            <person name="Li R."/>
            <person name="Xu Z."/>
            <person name="Li S."/>
            <person name="Li X."/>
            <person name="Zheng H."/>
            <person name="Cong L."/>
            <person name="Lin L."/>
            <person name="Yin J."/>
            <person name="Geng J."/>
            <person name="Li G."/>
            <person name="Shi J."/>
            <person name="Liu J."/>
            <person name="Lv H."/>
            <person name="Li J."/>
            <person name="Wang J."/>
            <person name="Deng Y."/>
            <person name="Ran L."/>
            <person name="Shi X."/>
            <person name="Wang X."/>
            <person name="Wu Q."/>
            <person name="Li C."/>
            <person name="Ren X."/>
            <person name="Wang J."/>
            <person name="Wang X."/>
            <person name="Li D."/>
            <person name="Liu D."/>
            <person name="Zhang X."/>
            <person name="Ji Z."/>
            <person name="Zhao W."/>
            <person name="Sun Y."/>
            <person name="Zhang Z."/>
            <person name="Bao J."/>
            <person name="Han Y."/>
            <person name="Dong L."/>
            <person name="Ji J."/>
            <person name="Chen P."/>
            <person name="Wu S."/>
            <person name="Liu J."/>
            <person name="Xiao Y."/>
            <person name="Bu D."/>
            <person name="Tan J."/>
            <person name="Yang L."/>
            <person name="Ye C."/>
            <person name="Zhang J."/>
            <person name="Xu J."/>
            <person name="Zhou Y."/>
            <person name="Yu Y."/>
            <person name="Zhang B."/>
            <person name="Zhuang S."/>
            <person name="Wei H."/>
            <person name="Liu B."/>
            <person name="Lei M."/>
            <person name="Yu H."/>
            <person name="Li Y."/>
            <person name="Xu H."/>
            <person name="Wei S."/>
            <person name="He X."/>
            <person name="Fang L."/>
            <person name="Zhang Z."/>
            <person name="Zhang Y."/>
            <person name="Huang X."/>
            <person name="Su Z."/>
            <person name="Tong W."/>
            <person name="Li J."/>
            <person name="Tong Z."/>
            <person name="Li S."/>
            <person name="Ye J."/>
            <person name="Wang L."/>
            <person name="Fang L."/>
            <person name="Lei T."/>
            <person name="Chen C.-S."/>
            <person name="Chen H.-C."/>
            <person name="Xu Z."/>
            <person name="Li H."/>
            <person name="Huang H."/>
            <person name="Zhang F."/>
            <person name="Xu H."/>
            <person name="Li N."/>
            <person name="Zhao C."/>
            <person name="Li S."/>
            <person name="Dong L."/>
            <person name="Huang Y."/>
            <person name="Li L."/>
            <person name="Xi Y."/>
            <person name="Qi Q."/>
            <person name="Li W."/>
            <person name="Zhang B."/>
            <person name="Hu W."/>
            <person name="Zhang Y."/>
            <person name="Tian X."/>
            <person name="Jiao Y."/>
            <person name="Liang X."/>
            <person name="Jin J."/>
            <person name="Gao L."/>
            <person name="Zheng W."/>
            <person name="Hao B."/>
            <person name="Liu S.-M."/>
            <person name="Wang W."/>
            <person name="Yuan L."/>
            <person name="Cao M."/>
            <person name="McDermott J."/>
            <person name="Samudrala R."/>
            <person name="Wang J."/>
            <person name="Wong G.K.-S."/>
            <person name="Yang H."/>
        </authorList>
    </citation>
    <scope>NUCLEOTIDE SEQUENCE [LARGE SCALE GENOMIC DNA]</scope>
    <source>
        <strain>cv. Nipponbare</strain>
    </source>
</reference>
<reference key="6">
    <citation type="journal article" date="2003" name="Science">
        <title>Collection, mapping, and annotation of over 28,000 cDNA clones from japonica rice.</title>
        <authorList>
            <consortium name="The rice full-length cDNA consortium"/>
        </authorList>
    </citation>
    <scope>NUCLEOTIDE SEQUENCE [LARGE SCALE MRNA]</scope>
    <source>
        <strain>cv. Nipponbare</strain>
    </source>
</reference>
<reference key="7">
    <citation type="journal article" date="2006" name="J. Exp. Bot.">
        <title>Genome-wide analysis of plant glutaredoxin systems.</title>
        <authorList>
            <person name="Rouhier N."/>
            <person name="Couturier J."/>
            <person name="Jacquot J.-P."/>
        </authorList>
    </citation>
    <scope>GENE FAMILY</scope>
</reference>
<gene>
    <name type="primary">GRXS7</name>
    <name type="ordered locus">Os03g0851200</name>
    <name type="ordered locus">LOC_Os03g63420</name>
    <name evidence="5" type="ORF">OsJ_13389</name>
    <name type="ORF">OSJNBa0015N08.14</name>
</gene>
<accession>Q851Y7</accession>
<accession>B7E3P1</accession>
<comment type="function">
    <text evidence="4">May only reduce GSH-thiol disulfides, but not protein disulfides.</text>
</comment>
<comment type="subcellular location">
    <subcellularLocation>
        <location evidence="4">Plastid</location>
        <location evidence="4">Chloroplast</location>
    </subcellularLocation>
</comment>
<comment type="similarity">
    <text evidence="4">Belongs to the glutaredoxin family. CGFS subfamily.</text>
</comment>